<reference evidence="5" key="1">
    <citation type="journal article" date="2007" name="Nature">
        <title>Evolution of genes and genomes on the Drosophila phylogeny.</title>
        <authorList>
            <consortium name="Drosophila 12 genomes consortium"/>
        </authorList>
    </citation>
    <scope>NUCLEOTIDE SEQUENCE [LARGE SCALE GENOMIC DNA]</scope>
    <source>
        <strain>MSH-3 / Tucson 14011-0111.49</strain>
    </source>
</reference>
<feature type="signal peptide" evidence="4">
    <location>
        <begin position="1"/>
        <end status="unknown"/>
    </location>
</feature>
<feature type="propeptide" id="PRO_0000383066" evidence="4">
    <location>
        <begin status="unknown"/>
        <end position="92"/>
    </location>
</feature>
<feature type="chain" id="PRO_0000383067" description="Protein hedgehog" evidence="1">
    <location>
        <begin position="93"/>
        <end position="481"/>
    </location>
</feature>
<feature type="chain" id="PRO_0000383068" description="Protein hedgehog N-product" evidence="1">
    <location>
        <begin position="93"/>
        <end position="265"/>
    </location>
</feature>
<feature type="binding site" evidence="2">
    <location>
        <position position="157"/>
    </location>
    <ligand>
        <name>Ca(2+)</name>
        <dbReference type="ChEBI" id="CHEBI:29108"/>
        <label>1</label>
    </ligand>
</feature>
<feature type="binding site" evidence="2">
    <location>
        <position position="158"/>
    </location>
    <ligand>
        <name>Ca(2+)</name>
        <dbReference type="ChEBI" id="CHEBI:29108"/>
        <label>1</label>
    </ligand>
</feature>
<feature type="binding site" evidence="2">
    <location>
        <position position="158"/>
    </location>
    <ligand>
        <name>Ca(2+)</name>
        <dbReference type="ChEBI" id="CHEBI:29108"/>
        <label>2</label>
    </ligand>
</feature>
<feature type="binding site" evidence="2">
    <location>
        <position position="163"/>
    </location>
    <ligand>
        <name>Ca(2+)</name>
        <dbReference type="ChEBI" id="CHEBI:29108"/>
        <label>1</label>
    </ligand>
</feature>
<feature type="binding site" evidence="2">
    <location>
        <position position="193"/>
    </location>
    <ligand>
        <name>Ca(2+)</name>
        <dbReference type="ChEBI" id="CHEBI:29108"/>
        <label>1</label>
    </ligand>
</feature>
<feature type="binding site" evidence="2">
    <location>
        <position position="194"/>
    </location>
    <ligand>
        <name>Ca(2+)</name>
        <dbReference type="ChEBI" id="CHEBI:29108"/>
        <label>1</label>
    </ligand>
</feature>
<feature type="binding site" evidence="2">
    <location>
        <position position="194"/>
    </location>
    <ligand>
        <name>Ca(2+)</name>
        <dbReference type="ChEBI" id="CHEBI:29108"/>
        <label>2</label>
    </ligand>
</feature>
<feature type="binding site" evidence="2">
    <location>
        <position position="197"/>
    </location>
    <ligand>
        <name>Ca(2+)</name>
        <dbReference type="ChEBI" id="CHEBI:29108"/>
        <label>2</label>
    </ligand>
</feature>
<feature type="binding site" evidence="2">
    <location>
        <position position="199"/>
    </location>
    <ligand>
        <name>Ca(2+)</name>
        <dbReference type="ChEBI" id="CHEBI:29108"/>
        <label>2</label>
    </ligand>
</feature>
<feature type="site" description="Cleavage; by autolysis" evidence="1">
    <location>
        <begin position="265"/>
        <end position="266"/>
    </location>
</feature>
<feature type="site" description="Involved in cholesterol transfer" evidence="1">
    <location>
        <position position="311"/>
    </location>
</feature>
<feature type="site" description="Involved in auto-cleavage" evidence="1">
    <location>
        <position position="334"/>
    </location>
</feature>
<feature type="site" description="Essential for auto-cleavage" evidence="1">
    <location>
        <position position="337"/>
    </location>
</feature>
<feature type="lipid moiety-binding region" description="N-palmitoyl cysteine" evidence="1">
    <location>
        <position position="93"/>
    </location>
</feature>
<feature type="lipid moiety-binding region" description="Cholesterol glycine ester" evidence="1">
    <location>
        <position position="265"/>
    </location>
</feature>
<comment type="function">
    <molecule>Protein hedgehog</molecule>
    <text evidence="1 3">The C-terminal part of the hedgehog protein precursor displays an autoproteolysis activity that results in the cleavage of the full-length protein into two parts (N-product and C-product) (By similarity). In addition, the C-terminal part displays a cholesterol transferase activity that results by the covalent attachment of a cholesterol moiety to the C-terminal of the newly generated N-product (By similarity). Once cleaved, the C-product has no signaling activity and diffuses from the cell (By similarity).</text>
</comment>
<comment type="function">
    <molecule>Protein hedgehog N-product</molecule>
    <text evidence="1">The dually lipidated hedgehog protein N-product is a morphogen which is essential for a variety of patterning events during development. Establishes the anterior-posterior axis of the embryonic segments and patterns the larval imaginal disks. Binds to the patched (ptc) receptor, which functions in association with smoothened (smo), to activate the transcription of target genes wingless (wg), decapentaplegic (dpp) and ptc. In the absence of hh, ptc represses the constitutive signaling activity of smo through fused (fu). Essential component of a signaling pathway which regulates the Duox-dependent gut immune response to bacterial uracil; required to activate Cad99C-dependent endosome formation, norpA-dependent Ca2+ mobilization and p38 MAPK, which are essential steps in the Duox-dependent production of reactive oxygen species (ROS) in response to intestinal bacterial infection. During photoreceptor differentiation, it up-regulates transcription of Ubr3, which in turn promotes the hh-signaling pathway by mediating the ubiquitination and degradation of cos.</text>
</comment>
<comment type="catalytic activity">
    <molecule>Protein hedgehog</molecule>
    <reaction evidence="3">
        <text>glycyl-L-cysteinyl-[protein] + cholesterol + H(+) = [protein]-C-terminal glycyl cholesterol ester + N-terminal L-cysteinyl-[protein]</text>
        <dbReference type="Rhea" id="RHEA:59504"/>
        <dbReference type="Rhea" id="RHEA-COMP:12707"/>
        <dbReference type="Rhea" id="RHEA-COMP:15369"/>
        <dbReference type="Rhea" id="RHEA-COMP:15374"/>
        <dbReference type="ChEBI" id="CHEBI:15378"/>
        <dbReference type="ChEBI" id="CHEBI:16113"/>
        <dbReference type="ChEBI" id="CHEBI:65250"/>
        <dbReference type="ChEBI" id="CHEBI:143135"/>
        <dbReference type="ChEBI" id="CHEBI:143140"/>
    </reaction>
    <physiologicalReaction direction="left-to-right" evidence="3">
        <dbReference type="Rhea" id="RHEA:59505"/>
    </physiologicalReaction>
</comment>
<comment type="subunit">
    <text evidence="1">Interacts with shf.</text>
</comment>
<comment type="subcellular location">
    <subcellularLocation>
        <location evidence="1">Nucleus</location>
    </subcellularLocation>
    <subcellularLocation>
        <location evidence="1">Cytoplasm</location>
    </subcellularLocation>
    <text evidence="1">Nuclear up to embryonic stage 10 and then at stage 11 shifts to the cytoplasm. Also secreted in either cleaved or uncleaved form to mediate signaling to other cells.</text>
</comment>
<comment type="subcellular location">
    <molecule>Protein hedgehog N-product</molecule>
    <subcellularLocation>
        <location evidence="1">Cell membrane</location>
        <topology evidence="1">Lipid-anchor</topology>
    </subcellularLocation>
    <text evidence="1">The N-terminal peptide remains associated with the cell surface. Heparan sulfate proteoglycans of the extracellular matrix play an essential role in diffusion. Lipophorin is required for diffusion, probably by acting as vehicle for its movement, explaining how it can spread over long distances despite its lipidation.</text>
</comment>
<comment type="PTM">
    <molecule>Protein hedgehog</molecule>
    <text evidence="1 2 3">The C-terminal part of the hedgehog protein precursor displays an autoproteolysis activity that results in the cleavage of the full-length protein into two parts (N-product and C-product) (By similarity). In addition, the C-terminal part displays a cholesterol transferase activity that results by the covalent attachment of a cholesterol moiety to the C-terminal of the newly generated N-product (By similarity). The N-product is the active species in both local and long-range signaling, whereas the C-product has no signaling activity (By similarity).</text>
</comment>
<comment type="PTM">
    <molecule>Protein hedgehog N-product</molecule>
    <text evidence="3">Cholesterylation is required for N-product targeting to lipid rafts and multimerization.</text>
</comment>
<comment type="PTM">
    <molecule>Protein hedgehog N-product</molecule>
    <text evidence="1">N-palmitoylation by Rasp of the hedgehog N-product, within the secretory pathway, is required for the embryonic and larval patterning activities of the hedgehog signal.</text>
</comment>
<comment type="similarity">
    <text evidence="4">Belongs to the hedgehog family.</text>
</comment>
<evidence type="ECO:0000250" key="1">
    <source>
        <dbReference type="UniProtKB" id="Q02936"/>
    </source>
</evidence>
<evidence type="ECO:0000250" key="2">
    <source>
        <dbReference type="UniProtKB" id="Q15465"/>
    </source>
</evidence>
<evidence type="ECO:0000250" key="3">
    <source>
        <dbReference type="UniProtKB" id="Q62226"/>
    </source>
</evidence>
<evidence type="ECO:0000255" key="4"/>
<evidence type="ECO:0000312" key="5">
    <source>
        <dbReference type="EMBL" id="EDW24033.1"/>
    </source>
</evidence>
<organism>
    <name type="scientific">Drosophila persimilis</name>
    <name type="common">Fruit fly</name>
    <dbReference type="NCBI Taxonomy" id="7234"/>
    <lineage>
        <taxon>Eukaryota</taxon>
        <taxon>Metazoa</taxon>
        <taxon>Ecdysozoa</taxon>
        <taxon>Arthropoda</taxon>
        <taxon>Hexapoda</taxon>
        <taxon>Insecta</taxon>
        <taxon>Pterygota</taxon>
        <taxon>Neoptera</taxon>
        <taxon>Endopterygota</taxon>
        <taxon>Diptera</taxon>
        <taxon>Brachycera</taxon>
        <taxon>Muscomorpha</taxon>
        <taxon>Ephydroidea</taxon>
        <taxon>Drosophilidae</taxon>
        <taxon>Drosophila</taxon>
        <taxon>Sophophora</taxon>
    </lineage>
</organism>
<keyword id="KW-0068">Autocatalytic cleavage</keyword>
<keyword id="KW-0106">Calcium</keyword>
<keyword id="KW-1003">Cell membrane</keyword>
<keyword id="KW-0963">Cytoplasm</keyword>
<keyword id="KW-0217">Developmental protein</keyword>
<keyword id="KW-0378">Hydrolase</keyword>
<keyword id="KW-0449">Lipoprotein</keyword>
<keyword id="KW-0472">Membrane</keyword>
<keyword id="KW-0479">Metal-binding</keyword>
<keyword id="KW-0504">Morphogen</keyword>
<keyword id="KW-0539">Nucleus</keyword>
<keyword id="KW-0564">Palmitate</keyword>
<keyword id="KW-0645">Protease</keyword>
<keyword id="KW-1185">Reference proteome</keyword>
<keyword id="KW-0709">Segmentation polarity protein</keyword>
<keyword id="KW-0732">Signal</keyword>
<keyword id="KW-0808">Transferase</keyword>
<name>HH_DROPE</name>
<protein>
    <recommendedName>
        <fullName evidence="1">Protein hedgehog</fullName>
        <ecNumber evidence="3">3.1.-.-</ecNumber>
    </recommendedName>
    <component>
        <recommendedName>
            <fullName evidence="1">Protein hedgehog N-product</fullName>
        </recommendedName>
    </component>
</protein>
<gene>
    <name evidence="1" type="primary">hh</name>
    <name type="ORF">GL23598</name>
</gene>
<proteinExistence type="inferred from homology"/>
<dbReference type="EC" id="3.1.-.-" evidence="3"/>
<dbReference type="EMBL" id="CH479179">
    <property type="protein sequence ID" value="EDW24033.1"/>
    <property type="molecule type" value="Genomic_DNA"/>
</dbReference>
<dbReference type="SMR" id="B4G2I8"/>
<dbReference type="STRING" id="7234.B4G2I8"/>
<dbReference type="MEROPS" id="C46.001"/>
<dbReference type="EnsemblMetazoa" id="FBtr0189213">
    <property type="protein sequence ID" value="FBpp0187705"/>
    <property type="gene ID" value="FBgn0161188"/>
</dbReference>
<dbReference type="EnsemblMetazoa" id="XM_002013011.2">
    <property type="protein sequence ID" value="XP_002013047.1"/>
    <property type="gene ID" value="LOC6587458"/>
</dbReference>
<dbReference type="GeneID" id="6587458"/>
<dbReference type="KEGG" id="dpe:6587458"/>
<dbReference type="CTD" id="42737"/>
<dbReference type="eggNOG" id="KOG3638">
    <property type="taxonomic scope" value="Eukaryota"/>
</dbReference>
<dbReference type="HOGENOM" id="CLU_034686_0_0_1"/>
<dbReference type="OMA" id="HWVSSLL"/>
<dbReference type="OrthoDB" id="5212at2759"/>
<dbReference type="PhylomeDB" id="B4G2I8"/>
<dbReference type="Proteomes" id="UP000008744">
    <property type="component" value="Unassembled WGS sequence"/>
</dbReference>
<dbReference type="GO" id="GO:0005737">
    <property type="term" value="C:cytoplasm"/>
    <property type="evidence" value="ECO:0007669"/>
    <property type="project" value="UniProtKB-SubCell"/>
</dbReference>
<dbReference type="GO" id="GO:0005615">
    <property type="term" value="C:extracellular space"/>
    <property type="evidence" value="ECO:0007669"/>
    <property type="project" value="TreeGrafter"/>
</dbReference>
<dbReference type="GO" id="GO:0005634">
    <property type="term" value="C:nucleus"/>
    <property type="evidence" value="ECO:0007669"/>
    <property type="project" value="UniProtKB-SubCell"/>
</dbReference>
<dbReference type="GO" id="GO:0005886">
    <property type="term" value="C:plasma membrane"/>
    <property type="evidence" value="ECO:0007669"/>
    <property type="project" value="UniProtKB-SubCell"/>
</dbReference>
<dbReference type="GO" id="GO:0005509">
    <property type="term" value="F:calcium ion binding"/>
    <property type="evidence" value="ECO:0007669"/>
    <property type="project" value="TreeGrafter"/>
</dbReference>
<dbReference type="GO" id="GO:0140853">
    <property type="term" value="F:cholesterol-protein transferase activity"/>
    <property type="evidence" value="ECO:0000250"/>
    <property type="project" value="UniProtKB"/>
</dbReference>
<dbReference type="GO" id="GO:0016015">
    <property type="term" value="F:morphogen activity"/>
    <property type="evidence" value="ECO:0007669"/>
    <property type="project" value="UniProtKB-KW"/>
</dbReference>
<dbReference type="GO" id="GO:0005113">
    <property type="term" value="F:patched binding"/>
    <property type="evidence" value="ECO:0007669"/>
    <property type="project" value="TreeGrafter"/>
</dbReference>
<dbReference type="GO" id="GO:0008233">
    <property type="term" value="F:peptidase activity"/>
    <property type="evidence" value="ECO:0000250"/>
    <property type="project" value="UniProtKB"/>
</dbReference>
<dbReference type="GO" id="GO:0009653">
    <property type="term" value="P:anatomical structure morphogenesis"/>
    <property type="evidence" value="ECO:0007669"/>
    <property type="project" value="UniProtKB-KW"/>
</dbReference>
<dbReference type="GO" id="GO:0001708">
    <property type="term" value="P:cell fate specification"/>
    <property type="evidence" value="ECO:0007669"/>
    <property type="project" value="TreeGrafter"/>
</dbReference>
<dbReference type="GO" id="GO:0007267">
    <property type="term" value="P:cell-cell signaling"/>
    <property type="evidence" value="ECO:0007669"/>
    <property type="project" value="InterPro"/>
</dbReference>
<dbReference type="GO" id="GO:0016539">
    <property type="term" value="P:intein-mediated protein splicing"/>
    <property type="evidence" value="ECO:0007669"/>
    <property type="project" value="InterPro"/>
</dbReference>
<dbReference type="GO" id="GO:0016540">
    <property type="term" value="P:protein autoprocessing"/>
    <property type="evidence" value="ECO:0007669"/>
    <property type="project" value="InterPro"/>
</dbReference>
<dbReference type="GO" id="GO:0010468">
    <property type="term" value="P:regulation of gene expression"/>
    <property type="evidence" value="ECO:0007669"/>
    <property type="project" value="TreeGrafter"/>
</dbReference>
<dbReference type="GO" id="GO:0007367">
    <property type="term" value="P:segment polarity determination"/>
    <property type="evidence" value="ECO:0000250"/>
    <property type="project" value="UniProtKB"/>
</dbReference>
<dbReference type="GO" id="GO:0097264">
    <property type="term" value="P:self proteolysis"/>
    <property type="evidence" value="ECO:0000250"/>
    <property type="project" value="UniProtKB"/>
</dbReference>
<dbReference type="GO" id="GO:0007224">
    <property type="term" value="P:smoothened signaling pathway"/>
    <property type="evidence" value="ECO:0007669"/>
    <property type="project" value="TreeGrafter"/>
</dbReference>
<dbReference type="GO" id="GO:0048731">
    <property type="term" value="P:system development"/>
    <property type="evidence" value="ECO:0007669"/>
    <property type="project" value="UniProtKB-ARBA"/>
</dbReference>
<dbReference type="CDD" id="cd00081">
    <property type="entry name" value="Hint"/>
    <property type="match status" value="1"/>
</dbReference>
<dbReference type="FunFam" id="2.170.16.10:FF:000001">
    <property type="entry name" value="Indian hedgehog"/>
    <property type="match status" value="1"/>
</dbReference>
<dbReference type="FunFam" id="3.30.1380.10:FF:000001">
    <property type="entry name" value="Indian hedgehog"/>
    <property type="match status" value="1"/>
</dbReference>
<dbReference type="Gene3D" id="3.30.1380.10">
    <property type="match status" value="1"/>
</dbReference>
<dbReference type="Gene3D" id="2.170.16.10">
    <property type="entry name" value="Hedgehog/Intein (Hint) domain"/>
    <property type="match status" value="1"/>
</dbReference>
<dbReference type="InterPro" id="IPR001657">
    <property type="entry name" value="Hedgehog"/>
</dbReference>
<dbReference type="InterPro" id="IPR001767">
    <property type="entry name" value="Hedgehog_Hint"/>
</dbReference>
<dbReference type="InterPro" id="IPR009045">
    <property type="entry name" value="Hedgehog_sig/DD-Pept_Zn-bd_sf"/>
</dbReference>
<dbReference type="InterPro" id="IPR050387">
    <property type="entry name" value="Hedgehog_Signaling"/>
</dbReference>
<dbReference type="InterPro" id="IPR000320">
    <property type="entry name" value="Hedgehog_signalling_dom"/>
</dbReference>
<dbReference type="InterPro" id="IPR003586">
    <property type="entry name" value="Hint_dom_C"/>
</dbReference>
<dbReference type="InterPro" id="IPR003587">
    <property type="entry name" value="Hint_dom_N"/>
</dbReference>
<dbReference type="InterPro" id="IPR036844">
    <property type="entry name" value="Hint_dom_sf"/>
</dbReference>
<dbReference type="InterPro" id="IPR006141">
    <property type="entry name" value="Intein_N"/>
</dbReference>
<dbReference type="PANTHER" id="PTHR11889">
    <property type="entry name" value="HEDGEHOG"/>
    <property type="match status" value="1"/>
</dbReference>
<dbReference type="PANTHER" id="PTHR11889:SF31">
    <property type="entry name" value="PROTEIN HEDGEHOG"/>
    <property type="match status" value="1"/>
</dbReference>
<dbReference type="Pfam" id="PF01085">
    <property type="entry name" value="HH_signal"/>
    <property type="match status" value="1"/>
</dbReference>
<dbReference type="Pfam" id="PF01079">
    <property type="entry name" value="Hint"/>
    <property type="match status" value="1"/>
</dbReference>
<dbReference type="PIRSF" id="PIRSF009400">
    <property type="entry name" value="Peptidase_C46"/>
    <property type="match status" value="1"/>
</dbReference>
<dbReference type="PRINTS" id="PR00632">
    <property type="entry name" value="SONICHHOG"/>
</dbReference>
<dbReference type="SMART" id="SM00305">
    <property type="entry name" value="HintC"/>
    <property type="match status" value="1"/>
</dbReference>
<dbReference type="SMART" id="SM00306">
    <property type="entry name" value="HintN"/>
    <property type="match status" value="1"/>
</dbReference>
<dbReference type="SUPFAM" id="SSF55166">
    <property type="entry name" value="Hedgehog/DD-peptidase"/>
    <property type="match status" value="1"/>
</dbReference>
<dbReference type="SUPFAM" id="SSF51294">
    <property type="entry name" value="Hedgehog/intein (Hint) domain"/>
    <property type="match status" value="1"/>
</dbReference>
<dbReference type="PROSITE" id="PS50817">
    <property type="entry name" value="INTEIN_N_TER"/>
    <property type="match status" value="1"/>
</dbReference>
<sequence length="481" mass="53482">MDNHNEVPMSMSAPWASAARVTCLSLDAKCHRPCPSSISASASASGCASDSAAIATTKLRHIAYTQRCSSRLTMLMTVLLLLLPLSFTPAHSCGPGRGLGRRRERNLYPLVLKQTIPNLSEYQSGASGPLEGEIKRDSPKFKDLVPNYNRDILFRDEEGTGADRLMTKRCKEKLNVLAYSVMNEWPGVRLLVTESWDEDHQHGQESLHYEGRAVTIATSDREPSRYGMLARLAVEAGFDWVSYVSRRHIYCSVKSDSSISSHVHGCFTPESTALLESGITKPLSEIAIGDRVLSMGSNGQPVYSEVILFMDRNLEQMQNFVELHTDGGAVLTVTPAHLISVWHPERQQLDYVFADRVEELNYVLVRDPQTGELRPQRVVRVGSVRSKGVVAPLTREGTIVVNSVAASCYAVIDSQSLAHWGLAPMRILAMLQSWMPAKDQLRSSQTEGVVSRAEQQNGIHWYANALYKVKDYVLPKSWRHD</sequence>
<accession>B4G2I8</accession>